<proteinExistence type="inferred from homology"/>
<name>MSRB_ENTFA</name>
<sequence>MTKPTEEELKQTLTDLQYAVTQENATERPFSGEYDDFYQDGIYVDIVSGEPLFSSLDKYDAGCGWPSFTKPIEKRGVKEKADFSHGMHRVEVRSQEADSHLGHVFTDGPLQEGGLRYCINAAALRFVPVADLEKEGYGEYLSLFK</sequence>
<reference key="1">
    <citation type="journal article" date="2003" name="Science">
        <title>Role of mobile DNA in the evolution of vancomycin-resistant Enterococcus faecalis.</title>
        <authorList>
            <person name="Paulsen I.T."/>
            <person name="Banerjei L."/>
            <person name="Myers G.S.A."/>
            <person name="Nelson K.E."/>
            <person name="Seshadri R."/>
            <person name="Read T.D."/>
            <person name="Fouts D.E."/>
            <person name="Eisen J.A."/>
            <person name="Gill S.R."/>
            <person name="Heidelberg J.F."/>
            <person name="Tettelin H."/>
            <person name="Dodson R.J."/>
            <person name="Umayam L.A."/>
            <person name="Brinkac L.M."/>
            <person name="Beanan M.J."/>
            <person name="Daugherty S.C."/>
            <person name="DeBoy R.T."/>
            <person name="Durkin S.A."/>
            <person name="Kolonay J.F."/>
            <person name="Madupu R."/>
            <person name="Nelson W.C."/>
            <person name="Vamathevan J.J."/>
            <person name="Tran B."/>
            <person name="Upton J."/>
            <person name="Hansen T."/>
            <person name="Shetty J."/>
            <person name="Khouri H.M."/>
            <person name="Utterback T.R."/>
            <person name="Radune D."/>
            <person name="Ketchum K.A."/>
            <person name="Dougherty B.A."/>
            <person name="Fraser C.M."/>
        </authorList>
    </citation>
    <scope>NUCLEOTIDE SEQUENCE [LARGE SCALE GENOMIC DNA]</scope>
    <source>
        <strain>ATCC 700802 / V583</strain>
    </source>
</reference>
<organism>
    <name type="scientific">Enterococcus faecalis (strain ATCC 700802 / V583)</name>
    <dbReference type="NCBI Taxonomy" id="226185"/>
    <lineage>
        <taxon>Bacteria</taxon>
        <taxon>Bacillati</taxon>
        <taxon>Bacillota</taxon>
        <taxon>Bacilli</taxon>
        <taxon>Lactobacillales</taxon>
        <taxon>Enterococcaceae</taxon>
        <taxon>Enterococcus</taxon>
    </lineage>
</organism>
<gene>
    <name evidence="1" type="primary">msrB</name>
    <name type="ordered locus">EF_3164</name>
</gene>
<evidence type="ECO:0000255" key="1">
    <source>
        <dbReference type="HAMAP-Rule" id="MF_01400"/>
    </source>
</evidence>
<evidence type="ECO:0000255" key="2">
    <source>
        <dbReference type="PROSITE-ProRule" id="PRU01126"/>
    </source>
</evidence>
<keyword id="KW-0560">Oxidoreductase</keyword>
<keyword id="KW-1185">Reference proteome</keyword>
<comment type="catalytic activity">
    <reaction evidence="1">
        <text>L-methionyl-[protein] + [thioredoxin]-disulfide + H2O = L-methionyl-(R)-S-oxide-[protein] + [thioredoxin]-dithiol</text>
        <dbReference type="Rhea" id="RHEA:24164"/>
        <dbReference type="Rhea" id="RHEA-COMP:10698"/>
        <dbReference type="Rhea" id="RHEA-COMP:10700"/>
        <dbReference type="Rhea" id="RHEA-COMP:12313"/>
        <dbReference type="Rhea" id="RHEA-COMP:12314"/>
        <dbReference type="ChEBI" id="CHEBI:15377"/>
        <dbReference type="ChEBI" id="CHEBI:16044"/>
        <dbReference type="ChEBI" id="CHEBI:29950"/>
        <dbReference type="ChEBI" id="CHEBI:45764"/>
        <dbReference type="ChEBI" id="CHEBI:50058"/>
        <dbReference type="EC" id="1.8.4.12"/>
    </reaction>
</comment>
<comment type="similarity">
    <text evidence="1">Belongs to the MsrB Met sulfoxide reductase family.</text>
</comment>
<dbReference type="EC" id="1.8.4.12" evidence="1"/>
<dbReference type="EMBL" id="AE016830">
    <property type="protein sequence ID" value="AAO82838.1"/>
    <property type="molecule type" value="Genomic_DNA"/>
</dbReference>
<dbReference type="RefSeq" id="NP_816768.1">
    <property type="nucleotide sequence ID" value="NC_004668.1"/>
</dbReference>
<dbReference type="RefSeq" id="WP_002354871.1">
    <property type="nucleotide sequence ID" value="NZ_KE136524.1"/>
</dbReference>
<dbReference type="SMR" id="P0DM32"/>
<dbReference type="STRING" id="226185.EF_3164"/>
<dbReference type="EnsemblBacteria" id="AAO82838">
    <property type="protein sequence ID" value="AAO82838"/>
    <property type="gene ID" value="EF_3164"/>
</dbReference>
<dbReference type="GeneID" id="60892404"/>
<dbReference type="KEGG" id="efa:EF3164"/>
<dbReference type="PATRIC" id="fig|226185.45.peg.414"/>
<dbReference type="eggNOG" id="COG0229">
    <property type="taxonomic scope" value="Bacteria"/>
</dbReference>
<dbReference type="HOGENOM" id="CLU_031040_8_5_9"/>
<dbReference type="Proteomes" id="UP000001415">
    <property type="component" value="Chromosome"/>
</dbReference>
<dbReference type="GO" id="GO:0005737">
    <property type="term" value="C:cytoplasm"/>
    <property type="evidence" value="ECO:0007669"/>
    <property type="project" value="TreeGrafter"/>
</dbReference>
<dbReference type="GO" id="GO:0033743">
    <property type="term" value="F:peptide-methionine (R)-S-oxide reductase activity"/>
    <property type="evidence" value="ECO:0007669"/>
    <property type="project" value="UniProtKB-UniRule"/>
</dbReference>
<dbReference type="GO" id="GO:0030091">
    <property type="term" value="P:protein repair"/>
    <property type="evidence" value="ECO:0007669"/>
    <property type="project" value="InterPro"/>
</dbReference>
<dbReference type="GO" id="GO:0006979">
    <property type="term" value="P:response to oxidative stress"/>
    <property type="evidence" value="ECO:0007669"/>
    <property type="project" value="InterPro"/>
</dbReference>
<dbReference type="FunFam" id="2.170.150.20:FF:000003">
    <property type="entry name" value="Peptide methionine sulfoxide reductase MsrB"/>
    <property type="match status" value="1"/>
</dbReference>
<dbReference type="Gene3D" id="2.170.150.20">
    <property type="entry name" value="Peptide methionine sulfoxide reductase"/>
    <property type="match status" value="1"/>
</dbReference>
<dbReference type="HAMAP" id="MF_01400">
    <property type="entry name" value="MsrB"/>
    <property type="match status" value="1"/>
</dbReference>
<dbReference type="InterPro" id="IPR028427">
    <property type="entry name" value="Met_Sox_Rdtase_MsrB"/>
</dbReference>
<dbReference type="InterPro" id="IPR002579">
    <property type="entry name" value="Met_Sox_Rdtase_MsrB_dom"/>
</dbReference>
<dbReference type="InterPro" id="IPR011057">
    <property type="entry name" value="Mss4-like_sf"/>
</dbReference>
<dbReference type="NCBIfam" id="TIGR00357">
    <property type="entry name" value="peptide-methionine (R)-S-oxide reductase MsrB"/>
    <property type="match status" value="1"/>
</dbReference>
<dbReference type="PANTHER" id="PTHR10173">
    <property type="entry name" value="METHIONINE SULFOXIDE REDUCTASE"/>
    <property type="match status" value="1"/>
</dbReference>
<dbReference type="PANTHER" id="PTHR10173:SF59">
    <property type="entry name" value="PEPTIDE METHIONINE SULFOXIDE REDUCTASE MSRA_MSRB"/>
    <property type="match status" value="1"/>
</dbReference>
<dbReference type="Pfam" id="PF01641">
    <property type="entry name" value="SelR"/>
    <property type="match status" value="1"/>
</dbReference>
<dbReference type="SUPFAM" id="SSF51316">
    <property type="entry name" value="Mss4-like"/>
    <property type="match status" value="1"/>
</dbReference>
<dbReference type="PROSITE" id="PS51790">
    <property type="entry name" value="MSRB"/>
    <property type="match status" value="1"/>
</dbReference>
<accession>P0DM32</accession>
<accession>Q9XB39</accession>
<protein>
    <recommendedName>
        <fullName evidence="1">Peptide methionine sulfoxide reductase MsrB</fullName>
        <ecNumber evidence="1">1.8.4.12</ecNumber>
    </recommendedName>
    <alternativeName>
        <fullName evidence="1">Peptide-methionine (R)-S-oxide reductase</fullName>
    </alternativeName>
</protein>
<feature type="chain" id="PRO_0000140274" description="Peptide methionine sulfoxide reductase MsrB">
    <location>
        <begin position="1"/>
        <end position="145"/>
    </location>
</feature>
<feature type="domain" description="MsrB" evidence="2">
    <location>
        <begin position="6"/>
        <end position="129"/>
    </location>
</feature>
<feature type="active site" description="Nucleophile" evidence="2">
    <location>
        <position position="118"/>
    </location>
</feature>